<keyword id="KW-0997">Cell inner membrane</keyword>
<keyword id="KW-1003">Cell membrane</keyword>
<keyword id="KW-0448">Lipopolysaccharide biosynthesis</keyword>
<keyword id="KW-0472">Membrane</keyword>
<keyword id="KW-0735">Signal-anchor</keyword>
<keyword id="KW-0808">Transferase</keyword>
<keyword id="KW-0812">Transmembrane</keyword>
<keyword id="KW-1133">Transmembrane helix</keyword>
<evidence type="ECO:0000250" key="1"/>
<evidence type="ECO:0000255" key="2"/>
<evidence type="ECO:0000269" key="3">
    <source>
    </source>
</evidence>
<evidence type="ECO:0000269" key="4">
    <source>
    </source>
</evidence>
<evidence type="ECO:0000269" key="5">
    <source>
    </source>
</evidence>
<evidence type="ECO:0000305" key="6"/>
<feature type="chain" id="PRO_0000419173" description="3-deoxy-D-manno-octulosonic acid transferase">
    <location>
        <begin position="1"/>
        <end position="433"/>
    </location>
</feature>
<feature type="transmembrane region" description="Helical; Signal-anchor" evidence="2">
    <location>
        <begin position="11"/>
        <end position="31"/>
    </location>
</feature>
<feature type="active site" description="Proton acceptor" evidence="1">
    <location>
        <position position="70"/>
    </location>
</feature>
<feature type="binding site" evidence="1">
    <location>
        <begin position="277"/>
        <end position="278"/>
    </location>
    <ligand>
        <name>CMP</name>
        <dbReference type="ChEBI" id="CHEBI:60377"/>
    </ligand>
</feature>
<feature type="binding site" evidence="1">
    <location>
        <begin position="317"/>
        <end position="319"/>
    </location>
    <ligand>
        <name>CMP</name>
        <dbReference type="ChEBI" id="CHEBI:60377"/>
    </ligand>
</feature>
<feature type="binding site" evidence="1">
    <location>
        <begin position="344"/>
        <end position="347"/>
    </location>
    <ligand>
        <name>CMP</name>
        <dbReference type="ChEBI" id="CHEBI:60377"/>
    </ligand>
</feature>
<feature type="site" description="Transition state stabilizer" evidence="1">
    <location>
        <position position="141"/>
    </location>
</feature>
<feature type="site" description="Transition state stabilizer" evidence="1">
    <location>
        <position position="219"/>
    </location>
</feature>
<accession>F0T4D1</accession>
<accession>Q06380</accession>
<comment type="function">
    <text evidence="3 4 5">Involved in lipopolysaccharide (LPS) biosynthesis. Catalyzes the transfer of predominantly four 3-deoxy-D-manno-octulosonate (Kdo) residues from CMP-Kdo to lipid IV(A), the tetraacyldisaccharide-1,4'-bisphosphate precursor of lipid A. Thus generates the genus-specific LPS epitope of Chlamydia, composed of the trisaccharide alpha-Kdo-(2-&gt;8)-alpha-Kdo-(2-&gt;4)-alpha-Kdo.</text>
</comment>
<comment type="catalytic activity">
    <reaction evidence="3 5">
        <text>lipid IVA (E. coli) + CMP-3-deoxy-beta-D-manno-octulosonate = alpha-Kdo-(2-&gt;6)-lipid IVA (E. coli) + CMP + H(+)</text>
        <dbReference type="Rhea" id="RHEA:28066"/>
        <dbReference type="ChEBI" id="CHEBI:15378"/>
        <dbReference type="ChEBI" id="CHEBI:58603"/>
        <dbReference type="ChEBI" id="CHEBI:60364"/>
        <dbReference type="ChEBI" id="CHEBI:60377"/>
        <dbReference type="ChEBI" id="CHEBI:85987"/>
        <dbReference type="EC" id="2.4.99.12"/>
    </reaction>
</comment>
<comment type="catalytic activity">
    <reaction evidence="3 5">
        <text>alpha-Kdo-(2-&gt;6)-lipid IVA (E. coli) + CMP-3-deoxy-beta-D-manno-octulosonate = alpha-Kdo-(2-&gt;4)-alpha-Kdo-(2-&gt;6)-lipid IVA (E. coli) + CMP + H(+)</text>
        <dbReference type="Rhea" id="RHEA:28062"/>
        <dbReference type="ChEBI" id="CHEBI:15378"/>
        <dbReference type="ChEBI" id="CHEBI:60364"/>
        <dbReference type="ChEBI" id="CHEBI:60365"/>
        <dbReference type="ChEBI" id="CHEBI:60377"/>
        <dbReference type="ChEBI" id="CHEBI:85987"/>
        <dbReference type="EC" id="2.4.99.13"/>
    </reaction>
</comment>
<comment type="catalytic activity">
    <reaction evidence="3 5">
        <text>alpha-Kdo-(2-&gt;4)-alpha-Kdo-(2-&gt;6)-lipid IVA (E. coli) + CMP-3-deoxy-beta-D-manno-octulosonate = alpha-Kdo-(2-&gt;8)-alpha-Kdo-(2-&gt;4)-alpha-Kdo-(2-&gt;6)-lipid IVA (E. coli) + CMP + H(+)</text>
        <dbReference type="Rhea" id="RHEA:28154"/>
        <dbReference type="ChEBI" id="CHEBI:15378"/>
        <dbReference type="ChEBI" id="CHEBI:60365"/>
        <dbReference type="ChEBI" id="CHEBI:60377"/>
        <dbReference type="ChEBI" id="CHEBI:85987"/>
        <dbReference type="ChEBI" id="CHEBI:86234"/>
        <dbReference type="EC" id="2.4.99.14"/>
    </reaction>
</comment>
<comment type="catalytic activity">
    <reaction evidence="3 5">
        <text>alpha-Kdo-(2-&gt;8)-alpha-Kdo-(2-&gt;4)-alpha-Kdo-(2-&gt;6)-lipid IVA (E. coli) + CMP-3-deoxy-beta-D-manno-octulosonate = alpha-Kdo-(2-&gt;8)-[alpha-Kdo-(2-&gt;4)]-alpha-Kdo-(2-&gt;4)-alpha-Kdo-(2-&gt;6)-lipid IVA + CMP + H(+)</text>
        <dbReference type="Rhea" id="RHEA:28158"/>
        <dbReference type="ChEBI" id="CHEBI:15378"/>
        <dbReference type="ChEBI" id="CHEBI:60377"/>
        <dbReference type="ChEBI" id="CHEBI:85987"/>
        <dbReference type="ChEBI" id="CHEBI:86234"/>
        <dbReference type="ChEBI" id="CHEBI:86236"/>
        <dbReference type="EC" id="2.4.99.15"/>
    </reaction>
</comment>
<comment type="pathway">
    <text>Bacterial outer membrane biogenesis; LPS core biosynthesis.</text>
</comment>
<comment type="subcellular location">
    <subcellularLocation>
        <location evidence="1">Cell inner membrane</location>
        <topology evidence="1">Single-pass membrane protein</topology>
        <orientation evidence="1">Cytoplasmic side</orientation>
    </subcellularLocation>
</comment>
<comment type="similarity">
    <text evidence="6">Belongs to the glycosyltransferase group 1 family. Glycosyltransferase 30 subfamily.</text>
</comment>
<comment type="sequence caution" evidence="6">
    <conflict type="erroneous initiation">
        <sequence resource="EMBL-CDS" id="CAA49233"/>
    </conflict>
    <text>Truncated N-terminus.</text>
</comment>
<reference key="1">
    <citation type="journal article" date="1993" name="Mol. Microbiol.">
        <title>The genus-specific lipopolysaccharide epitope of Chlamydia is assembled in C. psittaci and C. trachomatis by glycosyltransferases of low homology.</title>
        <authorList>
            <person name="Mamat U."/>
            <person name="Baumann M."/>
            <person name="Schmidt G."/>
            <person name="Brade H."/>
        </authorList>
    </citation>
    <scope>NUCLEOTIDE SEQUENCE [GENOMIC DNA]</scope>
    <scope>FUNCTION</scope>
    <source>
        <strain>ATCC VR-125 / 6BC</strain>
    </source>
</reference>
<reference key="2">
    <citation type="journal article" date="2011" name="J. Bacteriol.">
        <title>Full-length de novo sequence of the Chlamydophila psittaci type strain, 6BC.</title>
        <authorList>
            <person name="Voigt A."/>
            <person name="Schofl G."/>
            <person name="Heidrich A."/>
            <person name="Sachse K."/>
            <person name="Saluz H.P."/>
        </authorList>
    </citation>
    <scope>NUCLEOTIDE SEQUENCE [LARGE SCALE GENOMIC DNA]</scope>
    <source>
        <strain>ATCC VR-125 / 6BC</strain>
    </source>
</reference>
<reference key="3">
    <citation type="journal article" date="2011" name="J. Bacteriol.">
        <title>Genome sequences of the zoonotic pathogens Chlamydia psittaci 6BC and Cal10.</title>
        <authorList>
            <person name="Grinblat-Huse V."/>
            <person name="Drabek E.F."/>
            <person name="Creasy H.H."/>
            <person name="Daugherty S.C."/>
            <person name="Jones K.M."/>
            <person name="Santana-Cruz I."/>
            <person name="Tallon L.J."/>
            <person name="Read T.D."/>
            <person name="Hatch T.P."/>
            <person name="Bavoil P."/>
            <person name="Myers G.S."/>
        </authorList>
    </citation>
    <scope>NUCLEOTIDE SEQUENCE [LARGE SCALE GENOMIC DNA]</scope>
    <source>
        <strain>ATCC VR-125 / 6BC</strain>
    </source>
</reference>
<reference key="4">
    <citation type="journal article" date="1995" name="Eur. J. Biochem.">
        <title>The structures of oligosaccharide bisphosphates isolated from the lipopolysaccharide of a recombinant Escherichia coli strain expressing the gene gseA [3-deoxy-D-manno-octulopyranosonic acid (Kdo) transferase] of Chlamydia psittaci 6BC.</title>
        <authorList>
            <person name="Holst O."/>
            <person name="Bock K."/>
            <person name="Brade L."/>
            <person name="Brade H."/>
        </authorList>
    </citation>
    <scope>FUNCTION</scope>
    <scope>CATALYTIC ACTIVITY</scope>
    <scope>MULTIFUNCTIONALITY</scope>
    <source>
        <strain>ATCC VR-125 / 6BC</strain>
    </source>
</reference>
<reference key="5">
    <citation type="journal article" date="2000" name="Eur. J. Biochem.">
        <title>Comparative analyses of secondary gene products of 3-deoxy-D-manno-oct-2-ulosonic acid transferases from Chlamydiaceae in Escherichia coli K-12.</title>
        <authorList>
            <person name="Brabetz W."/>
            <person name="Lindner B."/>
            <person name="Brade H."/>
        </authorList>
    </citation>
    <scope>FUNCTION</scope>
    <scope>CATALYTIC ACTIVITY</scope>
    <scope>MULTIFUNCTIONALITY</scope>
    <source>
        <strain>ATCC VR-125 / 6BC</strain>
    </source>
</reference>
<protein>
    <recommendedName>
        <fullName>3-deoxy-D-manno-octulosonic acid transferase</fullName>
        <shortName>Kdo transferase</shortName>
        <ecNumber evidence="3 5">2.4.99.12</ecNumber>
        <ecNumber evidence="3 5">2.4.99.13</ecNumber>
        <ecNumber evidence="3 5">2.4.99.14</ecNumber>
        <ecNumber evidence="3 5">2.4.99.15</ecNumber>
    </recommendedName>
    <alternativeName>
        <fullName>Kdo(2)-lipid IV(A) 3-deoxy-D-manno-octulosonic acid transferase</fullName>
    </alternativeName>
    <alternativeName>
        <fullName>Kdo(3)-lipid IV(A) 3-deoxy-D-manno-octulosonic acid transferase</fullName>
    </alternativeName>
    <alternativeName>
        <fullName>Kdo-lipid IV(A) 3-deoxy-D-manno-octulosonic acid transferase</fullName>
    </alternativeName>
    <alternativeName>
        <fullName>Lipid IV(A) 3-deoxy-D-manno-octulosonic acid transferase</fullName>
    </alternativeName>
    <alternativeName>
        <fullName>Multifunctional Kdo transferase</fullName>
    </alternativeName>
</protein>
<sequence length="433" mass="49322">MIKGRRTKLHTFLYDCFLIFAFMVGLPRILYKRFVHGKYTKSLGIRFGFKKPEVPGTGPVAWFHGASVGETALLLPLLKRFMKEYPEWRCVVTSCTESGHENAHRLFGPLGVTTFILPLDLSIIIKPVVRAISPSLLVFSEGDCWLNFIEEAKRLGATAVIINGKLSANSCKRFTILKRFGRNYFSPVDGFLLQDEQHKARFLQLGVDKEKIQVTGNIKTYTETLSENNQRDYWREKLQLAQDTELLVLGSVHPKDVEVWLPVVRELRRNLKVLWVPRHIERSKELEALLSKENISYGLWSKEATFAQHDAIIVDAIGWLKQLYSAADLAFVGGTFDDRIGGHNLLEPLQCGVPLIFGPHIQSQSDLAERLLSMGAGCCLDKTNIVKVITFLLDHPEERAAYIQKGAMFLHEEKVAFDRTWESFKRYIPCVKI</sequence>
<gene>
    <name type="primary">waaA</name>
    <name type="synonym">gseA</name>
    <name type="ordered locus">CPSIT_0652</name>
    <name type="ordered locus">G5O_0645</name>
</gene>
<name>KDTA_CHLP6</name>
<organism>
    <name type="scientific">Chlamydophila psittaci (strain ATCC VR-125 / 6BC)</name>
    <name type="common">Chlamydia psittaci</name>
    <dbReference type="NCBI Taxonomy" id="331636"/>
    <lineage>
        <taxon>Bacteria</taxon>
        <taxon>Pseudomonadati</taxon>
        <taxon>Chlamydiota</taxon>
        <taxon>Chlamydiia</taxon>
        <taxon>Chlamydiales</taxon>
        <taxon>Chlamydiaceae</taxon>
        <taxon>Chlamydia/Chlamydophila group</taxon>
        <taxon>Chlamydia</taxon>
    </lineage>
</organism>
<dbReference type="EC" id="2.4.99.12" evidence="3 5"/>
<dbReference type="EC" id="2.4.99.13" evidence="3 5"/>
<dbReference type="EC" id="2.4.99.14" evidence="3 5"/>
<dbReference type="EC" id="2.4.99.15" evidence="3 5"/>
<dbReference type="EMBL" id="X69476">
    <property type="protein sequence ID" value="CAA49233.1"/>
    <property type="status" value="ALT_INIT"/>
    <property type="molecule type" value="Genomic_DNA"/>
</dbReference>
<dbReference type="EMBL" id="CP002549">
    <property type="protein sequence ID" value="ADZ18468.1"/>
    <property type="molecule type" value="Genomic_DNA"/>
</dbReference>
<dbReference type="EMBL" id="CP002586">
    <property type="protein sequence ID" value="AEB55626.1"/>
    <property type="molecule type" value="Genomic_DNA"/>
</dbReference>
<dbReference type="SMR" id="F0T4D1"/>
<dbReference type="CAZy" id="GT30">
    <property type="family name" value="Glycosyltransferase Family 30"/>
</dbReference>
<dbReference type="KEGG" id="chb:G5O_0645"/>
<dbReference type="KEGG" id="chp:CPSIT_0652"/>
<dbReference type="PATRIC" id="fig|331636.3.peg.626"/>
<dbReference type="HOGENOM" id="CLU_036146_2_1_0"/>
<dbReference type="BioCyc" id="MetaCyc:MONOMER-15506"/>
<dbReference type="BRENDA" id="2.4.99.12">
    <property type="organism ID" value="1312"/>
</dbReference>
<dbReference type="BRENDA" id="2.4.99.13">
    <property type="organism ID" value="1312"/>
</dbReference>
<dbReference type="BRENDA" id="2.4.99.14">
    <property type="organism ID" value="1312"/>
</dbReference>
<dbReference type="UniPathway" id="UPA00958"/>
<dbReference type="GO" id="GO:0005886">
    <property type="term" value="C:plasma membrane"/>
    <property type="evidence" value="ECO:0007669"/>
    <property type="project" value="UniProtKB-SubCell"/>
</dbReference>
<dbReference type="GO" id="GO:0043842">
    <property type="term" value="F:Kdo transferase activity"/>
    <property type="evidence" value="ECO:0007669"/>
    <property type="project" value="UniProtKB-EC"/>
</dbReference>
<dbReference type="GO" id="GO:0009245">
    <property type="term" value="P:lipid A biosynthetic process"/>
    <property type="evidence" value="ECO:0007669"/>
    <property type="project" value="TreeGrafter"/>
</dbReference>
<dbReference type="GO" id="GO:0009244">
    <property type="term" value="P:lipopolysaccharide core region biosynthetic process"/>
    <property type="evidence" value="ECO:0007669"/>
    <property type="project" value="UniProtKB-UniPathway"/>
</dbReference>
<dbReference type="Gene3D" id="3.40.50.11720">
    <property type="entry name" value="3-Deoxy-D-manno-octulosonic-acid transferase, N-terminal domain"/>
    <property type="match status" value="1"/>
</dbReference>
<dbReference type="Gene3D" id="3.40.50.2000">
    <property type="entry name" value="Glycogen Phosphorylase B"/>
    <property type="match status" value="1"/>
</dbReference>
<dbReference type="InterPro" id="IPR007507">
    <property type="entry name" value="Glycos_transf_N"/>
</dbReference>
<dbReference type="InterPro" id="IPR038107">
    <property type="entry name" value="Glycos_transf_N_sf"/>
</dbReference>
<dbReference type="InterPro" id="IPR039901">
    <property type="entry name" value="Kdotransferase"/>
</dbReference>
<dbReference type="NCBIfam" id="NF004389">
    <property type="entry name" value="PRK05749.1-5"/>
    <property type="match status" value="1"/>
</dbReference>
<dbReference type="PANTHER" id="PTHR42755:SF1">
    <property type="entry name" value="3-DEOXY-D-MANNO-OCTULOSONIC ACID TRANSFERASE, MITOCHONDRIAL-RELATED"/>
    <property type="match status" value="1"/>
</dbReference>
<dbReference type="PANTHER" id="PTHR42755">
    <property type="entry name" value="3-DEOXY-MANNO-OCTULOSONATE CYTIDYLYLTRANSFERASE"/>
    <property type="match status" value="1"/>
</dbReference>
<dbReference type="Pfam" id="PF04413">
    <property type="entry name" value="Glycos_transf_N"/>
    <property type="match status" value="1"/>
</dbReference>
<dbReference type="SUPFAM" id="SSF53756">
    <property type="entry name" value="UDP-Glycosyltransferase/glycogen phosphorylase"/>
    <property type="match status" value="1"/>
</dbReference>
<proteinExistence type="evidence at protein level"/>